<organism>
    <name type="scientific">Bos taurus</name>
    <name type="common">Bovine</name>
    <dbReference type="NCBI Taxonomy" id="9913"/>
    <lineage>
        <taxon>Eukaryota</taxon>
        <taxon>Metazoa</taxon>
        <taxon>Chordata</taxon>
        <taxon>Craniata</taxon>
        <taxon>Vertebrata</taxon>
        <taxon>Euteleostomi</taxon>
        <taxon>Mammalia</taxon>
        <taxon>Eutheria</taxon>
        <taxon>Laurasiatheria</taxon>
        <taxon>Artiodactyla</taxon>
        <taxon>Ruminantia</taxon>
        <taxon>Pecora</taxon>
        <taxon>Bovidae</taxon>
        <taxon>Bovinae</taxon>
        <taxon>Bos</taxon>
    </lineage>
</organism>
<keyword id="KW-0007">Acetylation</keyword>
<keyword id="KW-0010">Activator</keyword>
<keyword id="KW-0963">Cytoplasm</keyword>
<keyword id="KW-0456">Lyase</keyword>
<keyword id="KW-0539">Nucleus</keyword>
<keyword id="KW-1185">Reference proteome</keyword>
<keyword id="KW-0783">Tetrahydrobiopterin biosynthesis</keyword>
<keyword id="KW-0804">Transcription</keyword>
<keyword id="KW-0805">Transcription regulation</keyword>
<comment type="function">
    <text evidence="3 4">Involved in tetrahydrobiopterin biosynthesis. Seems to both prevent the formation of 7-pterins and accelerate the formation of quinonoid-BH2. Coactivator for HNF1A-dependent transcription. Regulates the dimerization of homeodomain protein HNF1A and enhances its transcriptional activity (By similarity). Also acts as a coactivator for HNF1B-dependent transcription (By similarity).</text>
</comment>
<comment type="catalytic activity">
    <reaction evidence="4">
        <text>(4aS,6R)-4a-hydroxy-L-erythro-5,6,7,8-tetrahydrobiopterin = (6R)-L-erythro-6,7-dihydrobiopterin + H2O</text>
        <dbReference type="Rhea" id="RHEA:11920"/>
        <dbReference type="ChEBI" id="CHEBI:15377"/>
        <dbReference type="ChEBI" id="CHEBI:15642"/>
        <dbReference type="ChEBI" id="CHEBI:43120"/>
        <dbReference type="EC" id="4.2.1.96"/>
    </reaction>
</comment>
<comment type="subunit">
    <text evidence="2 4">Homotetramer and homodimer. Heterotetramer with HNF1A; formed by a dimer of dimers (By similarity). Interacts with HNF1B (via HNF-p1 domain); the interaction increases HNF1B transactivation activity (By similarity).</text>
</comment>
<comment type="subcellular location">
    <subcellularLocation>
        <location evidence="4">Cytoplasm</location>
    </subcellularLocation>
    <subcellularLocation>
        <location evidence="4">Nucleus</location>
    </subcellularLocation>
    <text evidence="2">Recruited to the nucleus through the interaction with HNF1B.</text>
</comment>
<comment type="similarity">
    <text evidence="5">Belongs to the pterin-4-alpha-carbinolamine dehydratase family.</text>
</comment>
<comment type="sequence caution" evidence="5">
    <conflict type="erroneous initiation">
        <sequence resource="EMBL-CDS" id="AAI03435"/>
    </conflict>
</comment>
<evidence type="ECO:0000250" key="1"/>
<evidence type="ECO:0000250" key="2">
    <source>
        <dbReference type="UniProtKB" id="P35680"/>
    </source>
</evidence>
<evidence type="ECO:0000250" key="3">
    <source>
        <dbReference type="UniProtKB" id="P61457"/>
    </source>
</evidence>
<evidence type="ECO:0000250" key="4">
    <source>
        <dbReference type="UniProtKB" id="P61459"/>
    </source>
</evidence>
<evidence type="ECO:0000305" key="5"/>
<sequence length="104" mass="11986">MAGKAHRLSAEERDQLLPNLRAVGWNELEGRDAIFKQFHFKDFNRAFGFMTRVALQAEKLDHHPEWFNVYNKVHITLSTHECAGLSERDVNLASFIEQVAVSMT</sequence>
<name>PHS_BOVIN</name>
<protein>
    <recommendedName>
        <fullName>Pterin-4-alpha-carbinolamine dehydratase</fullName>
        <shortName>PHS</shortName>
        <ecNumber evidence="4">4.2.1.96</ecNumber>
    </recommendedName>
    <alternativeName>
        <fullName>4-alpha-hydroxy-tetrahydropterin dehydratase</fullName>
    </alternativeName>
    <alternativeName>
        <fullName>Dimerization cofactor of hepatocyte nuclear factor 1-alpha</fullName>
        <shortName>DCoH</shortName>
        <shortName>Dimerization cofactor of HNF1</shortName>
    </alternativeName>
    <alternativeName>
        <fullName>Phenylalanine hydroxylase-stimulating protein</fullName>
    </alternativeName>
    <alternativeName>
        <fullName>Pterin carbinolamine dehydratase</fullName>
        <shortName>PCD</shortName>
    </alternativeName>
</protein>
<feature type="initiator methionine" description="Removed" evidence="3">
    <location>
        <position position="1"/>
    </location>
</feature>
<feature type="chain" id="PRO_0000315210" description="Pterin-4-alpha-carbinolamine dehydratase">
    <location>
        <begin position="2"/>
        <end position="104"/>
    </location>
</feature>
<feature type="binding site" evidence="1">
    <location>
        <begin position="61"/>
        <end position="63"/>
    </location>
    <ligand>
        <name>substrate</name>
    </ligand>
</feature>
<feature type="binding site" evidence="1">
    <location>
        <begin position="78"/>
        <end position="81"/>
    </location>
    <ligand>
        <name>substrate</name>
    </ligand>
</feature>
<feature type="modified residue" description="N-acetylalanine" evidence="3">
    <location>
        <position position="2"/>
    </location>
</feature>
<proteinExistence type="inferred from homology"/>
<gene>
    <name type="primary">PCBD1</name>
</gene>
<reference key="1">
    <citation type="submission" date="2005-08" db="EMBL/GenBank/DDBJ databases">
        <authorList>
            <consortium name="NIH - Mammalian Gene Collection (MGC) project"/>
        </authorList>
    </citation>
    <scope>NUCLEOTIDE SEQUENCE [LARGE SCALE MRNA]</scope>
    <source>
        <strain>Hereford</strain>
        <tissue>Hypothalamus</tissue>
    </source>
</reference>
<accession>Q3ZBD3</accession>
<dbReference type="EC" id="4.2.1.96" evidence="4"/>
<dbReference type="EMBL" id="BC103434">
    <property type="protein sequence ID" value="AAI03435.1"/>
    <property type="status" value="ALT_INIT"/>
    <property type="molecule type" value="mRNA"/>
</dbReference>
<dbReference type="RefSeq" id="NP_001193403.1">
    <property type="nucleotide sequence ID" value="NM_001206474.1"/>
</dbReference>
<dbReference type="SMR" id="Q3ZBD3"/>
<dbReference type="FunCoup" id="Q3ZBD3">
    <property type="interactions" value="702"/>
</dbReference>
<dbReference type="STRING" id="9913.ENSBTAP00000015750"/>
<dbReference type="PaxDb" id="9913-ENSBTAP00000015750"/>
<dbReference type="PeptideAtlas" id="Q3ZBD3"/>
<dbReference type="GeneID" id="530736"/>
<dbReference type="KEGG" id="bta:530736"/>
<dbReference type="CTD" id="5092"/>
<dbReference type="VEuPathDB" id="HostDB:ENSBTAG00000011866"/>
<dbReference type="eggNOG" id="KOG4073">
    <property type="taxonomic scope" value="Eukaryota"/>
</dbReference>
<dbReference type="HOGENOM" id="CLU_081974_3_2_1"/>
<dbReference type="InParanoid" id="Q3ZBD3"/>
<dbReference type="OMA" id="WAEKWNH"/>
<dbReference type="OrthoDB" id="277398at2759"/>
<dbReference type="TreeFam" id="TF300188"/>
<dbReference type="Reactome" id="R-BTA-8964208">
    <property type="pathway name" value="Phenylalanine metabolism"/>
</dbReference>
<dbReference type="Proteomes" id="UP000009136">
    <property type="component" value="Chromosome 28"/>
</dbReference>
<dbReference type="Bgee" id="ENSBTAG00000011866">
    <property type="expression patterns" value="Expressed in liver and 104 other cell types or tissues"/>
</dbReference>
<dbReference type="GO" id="GO:0005829">
    <property type="term" value="C:cytosol"/>
    <property type="evidence" value="ECO:0007669"/>
    <property type="project" value="Ensembl"/>
</dbReference>
<dbReference type="GO" id="GO:0005654">
    <property type="term" value="C:nucleoplasm"/>
    <property type="evidence" value="ECO:0007669"/>
    <property type="project" value="Ensembl"/>
</dbReference>
<dbReference type="GO" id="GO:0008124">
    <property type="term" value="F:4-alpha-hydroxytetrahydrobiopterin dehydratase activity"/>
    <property type="evidence" value="ECO:0000318"/>
    <property type="project" value="GO_Central"/>
</dbReference>
<dbReference type="GO" id="GO:0042802">
    <property type="term" value="F:identical protein binding"/>
    <property type="evidence" value="ECO:0007669"/>
    <property type="project" value="Ensembl"/>
</dbReference>
<dbReference type="GO" id="GO:0004505">
    <property type="term" value="F:phenylalanine 4-monooxygenase activity"/>
    <property type="evidence" value="ECO:0007669"/>
    <property type="project" value="Ensembl"/>
</dbReference>
<dbReference type="GO" id="GO:0006729">
    <property type="term" value="P:tetrahydrobiopterin biosynthetic process"/>
    <property type="evidence" value="ECO:0007669"/>
    <property type="project" value="UniProtKB-KW"/>
</dbReference>
<dbReference type="CDD" id="cd00914">
    <property type="entry name" value="PCD_DCoH_subfamily_b"/>
    <property type="match status" value="1"/>
</dbReference>
<dbReference type="FunFam" id="3.30.1360.20:FF:000001">
    <property type="entry name" value="Pterin-4-alpha-carbinolamine dehydratase 2"/>
    <property type="match status" value="1"/>
</dbReference>
<dbReference type="Gene3D" id="3.30.1360.20">
    <property type="entry name" value="Transcriptional coactivator/pterin dehydratase"/>
    <property type="match status" value="1"/>
</dbReference>
<dbReference type="HAMAP" id="MF_00434">
    <property type="entry name" value="Pterin_4_alpha"/>
    <property type="match status" value="1"/>
</dbReference>
<dbReference type="InterPro" id="IPR036428">
    <property type="entry name" value="PCD_sf"/>
</dbReference>
<dbReference type="InterPro" id="IPR001533">
    <property type="entry name" value="Pterin_deHydtase"/>
</dbReference>
<dbReference type="NCBIfam" id="NF002018">
    <property type="entry name" value="PRK00823.1-3"/>
    <property type="match status" value="1"/>
</dbReference>
<dbReference type="NCBIfam" id="NF002020">
    <property type="entry name" value="PRK00823.1-5"/>
    <property type="match status" value="1"/>
</dbReference>
<dbReference type="PANTHER" id="PTHR12599">
    <property type="entry name" value="PTERIN-4-ALPHA-CARBINOLAMINE DEHYDRATASE"/>
    <property type="match status" value="1"/>
</dbReference>
<dbReference type="PANTHER" id="PTHR12599:SF13">
    <property type="entry name" value="PTERIN-4-ALPHA-CARBINOLAMINE DEHYDRATASE"/>
    <property type="match status" value="1"/>
</dbReference>
<dbReference type="Pfam" id="PF01329">
    <property type="entry name" value="Pterin_4a"/>
    <property type="match status" value="1"/>
</dbReference>
<dbReference type="SUPFAM" id="SSF55248">
    <property type="entry name" value="PCD-like"/>
    <property type="match status" value="1"/>
</dbReference>